<accession>Q4URD7</accession>
<keyword id="KW-0963">Cytoplasm</keyword>
<keyword id="KW-0251">Elongation factor</keyword>
<keyword id="KW-0342">GTP-binding</keyword>
<keyword id="KW-0378">Hydrolase</keyword>
<keyword id="KW-0460">Magnesium</keyword>
<keyword id="KW-0479">Metal-binding</keyword>
<keyword id="KW-0547">Nucleotide-binding</keyword>
<keyword id="KW-0648">Protein biosynthesis</keyword>
<gene>
    <name evidence="2" type="primary">tuf1</name>
    <name type="ordered locus">XC_3342</name>
</gene>
<organism>
    <name type="scientific">Xanthomonas campestris pv. campestris (strain 8004)</name>
    <dbReference type="NCBI Taxonomy" id="314565"/>
    <lineage>
        <taxon>Bacteria</taxon>
        <taxon>Pseudomonadati</taxon>
        <taxon>Pseudomonadota</taxon>
        <taxon>Gammaproteobacteria</taxon>
        <taxon>Lysobacterales</taxon>
        <taxon>Lysobacteraceae</taxon>
        <taxon>Xanthomonas</taxon>
    </lineage>
</organism>
<evidence type="ECO:0000250" key="1"/>
<evidence type="ECO:0000255" key="2">
    <source>
        <dbReference type="HAMAP-Rule" id="MF_00118"/>
    </source>
</evidence>
<reference key="1">
    <citation type="journal article" date="2005" name="Genome Res.">
        <title>Comparative and functional genomic analyses of the pathogenicity of phytopathogen Xanthomonas campestris pv. campestris.</title>
        <authorList>
            <person name="Qian W."/>
            <person name="Jia Y."/>
            <person name="Ren S.-X."/>
            <person name="He Y.-Q."/>
            <person name="Feng J.-X."/>
            <person name="Lu L.-F."/>
            <person name="Sun Q."/>
            <person name="Ying G."/>
            <person name="Tang D.-J."/>
            <person name="Tang H."/>
            <person name="Wu W."/>
            <person name="Hao P."/>
            <person name="Wang L."/>
            <person name="Jiang B.-L."/>
            <person name="Zeng S."/>
            <person name="Gu W.-Y."/>
            <person name="Lu G."/>
            <person name="Rong L."/>
            <person name="Tian Y."/>
            <person name="Yao Z."/>
            <person name="Fu G."/>
            <person name="Chen B."/>
            <person name="Fang R."/>
            <person name="Qiang B."/>
            <person name="Chen Z."/>
            <person name="Zhao G.-P."/>
            <person name="Tang J.-L."/>
            <person name="He C."/>
        </authorList>
    </citation>
    <scope>NUCLEOTIDE SEQUENCE [LARGE SCALE GENOMIC DNA]</scope>
    <source>
        <strain>8004</strain>
    </source>
</reference>
<proteinExistence type="inferred from homology"/>
<comment type="function">
    <text evidence="2">GTP hydrolase that promotes the GTP-dependent binding of aminoacyl-tRNA to the A-site of ribosomes during protein biosynthesis.</text>
</comment>
<comment type="catalytic activity">
    <reaction evidence="2">
        <text>GTP + H2O = GDP + phosphate + H(+)</text>
        <dbReference type="Rhea" id="RHEA:19669"/>
        <dbReference type="ChEBI" id="CHEBI:15377"/>
        <dbReference type="ChEBI" id="CHEBI:15378"/>
        <dbReference type="ChEBI" id="CHEBI:37565"/>
        <dbReference type="ChEBI" id="CHEBI:43474"/>
        <dbReference type="ChEBI" id="CHEBI:58189"/>
        <dbReference type="EC" id="3.6.5.3"/>
    </reaction>
    <physiologicalReaction direction="left-to-right" evidence="2">
        <dbReference type="Rhea" id="RHEA:19670"/>
    </physiologicalReaction>
</comment>
<comment type="subunit">
    <text evidence="2">Monomer.</text>
</comment>
<comment type="subcellular location">
    <subcellularLocation>
        <location evidence="2">Cytoplasm</location>
    </subcellularLocation>
</comment>
<comment type="similarity">
    <text evidence="2">Belongs to the TRAFAC class translation factor GTPase superfamily. Classic translation factor GTPase family. EF-Tu/EF-1A subfamily.</text>
</comment>
<dbReference type="EC" id="3.6.5.3" evidence="2"/>
<dbReference type="EMBL" id="CP000050">
    <property type="protein sequence ID" value="AAY50386.1"/>
    <property type="molecule type" value="Genomic_DNA"/>
</dbReference>
<dbReference type="SMR" id="Q4URD7"/>
<dbReference type="KEGG" id="xcb:XC_3342"/>
<dbReference type="HOGENOM" id="CLU_007265_0_0_6"/>
<dbReference type="Proteomes" id="UP000000420">
    <property type="component" value="Chromosome"/>
</dbReference>
<dbReference type="GO" id="GO:0005829">
    <property type="term" value="C:cytosol"/>
    <property type="evidence" value="ECO:0007669"/>
    <property type="project" value="TreeGrafter"/>
</dbReference>
<dbReference type="GO" id="GO:0005525">
    <property type="term" value="F:GTP binding"/>
    <property type="evidence" value="ECO:0007669"/>
    <property type="project" value="UniProtKB-UniRule"/>
</dbReference>
<dbReference type="GO" id="GO:0003924">
    <property type="term" value="F:GTPase activity"/>
    <property type="evidence" value="ECO:0007669"/>
    <property type="project" value="InterPro"/>
</dbReference>
<dbReference type="GO" id="GO:0097216">
    <property type="term" value="F:guanosine tetraphosphate binding"/>
    <property type="evidence" value="ECO:0007669"/>
    <property type="project" value="UniProtKB-ARBA"/>
</dbReference>
<dbReference type="GO" id="GO:0003746">
    <property type="term" value="F:translation elongation factor activity"/>
    <property type="evidence" value="ECO:0007669"/>
    <property type="project" value="UniProtKB-UniRule"/>
</dbReference>
<dbReference type="CDD" id="cd01884">
    <property type="entry name" value="EF_Tu"/>
    <property type="match status" value="1"/>
</dbReference>
<dbReference type="CDD" id="cd03697">
    <property type="entry name" value="EFTU_II"/>
    <property type="match status" value="1"/>
</dbReference>
<dbReference type="CDD" id="cd03707">
    <property type="entry name" value="EFTU_III"/>
    <property type="match status" value="1"/>
</dbReference>
<dbReference type="FunFam" id="2.40.30.10:FF:000001">
    <property type="entry name" value="Elongation factor Tu"/>
    <property type="match status" value="1"/>
</dbReference>
<dbReference type="FunFam" id="3.40.50.300:FF:000003">
    <property type="entry name" value="Elongation factor Tu"/>
    <property type="match status" value="1"/>
</dbReference>
<dbReference type="Gene3D" id="3.40.50.300">
    <property type="entry name" value="P-loop containing nucleotide triphosphate hydrolases"/>
    <property type="match status" value="1"/>
</dbReference>
<dbReference type="Gene3D" id="2.40.30.10">
    <property type="entry name" value="Translation factors"/>
    <property type="match status" value="2"/>
</dbReference>
<dbReference type="HAMAP" id="MF_00118_B">
    <property type="entry name" value="EF_Tu_B"/>
    <property type="match status" value="1"/>
</dbReference>
<dbReference type="InterPro" id="IPR041709">
    <property type="entry name" value="EF-Tu_GTP-bd"/>
</dbReference>
<dbReference type="InterPro" id="IPR050055">
    <property type="entry name" value="EF-Tu_GTPase"/>
</dbReference>
<dbReference type="InterPro" id="IPR004161">
    <property type="entry name" value="EFTu-like_2"/>
</dbReference>
<dbReference type="InterPro" id="IPR033720">
    <property type="entry name" value="EFTU_2"/>
</dbReference>
<dbReference type="InterPro" id="IPR031157">
    <property type="entry name" value="G_TR_CS"/>
</dbReference>
<dbReference type="InterPro" id="IPR027417">
    <property type="entry name" value="P-loop_NTPase"/>
</dbReference>
<dbReference type="InterPro" id="IPR005225">
    <property type="entry name" value="Small_GTP-bd"/>
</dbReference>
<dbReference type="InterPro" id="IPR000795">
    <property type="entry name" value="T_Tr_GTP-bd_dom"/>
</dbReference>
<dbReference type="InterPro" id="IPR009000">
    <property type="entry name" value="Transl_B-barrel_sf"/>
</dbReference>
<dbReference type="InterPro" id="IPR009001">
    <property type="entry name" value="Transl_elong_EF1A/Init_IF2_C"/>
</dbReference>
<dbReference type="InterPro" id="IPR004541">
    <property type="entry name" value="Transl_elong_EFTu/EF1A_bac/org"/>
</dbReference>
<dbReference type="InterPro" id="IPR004160">
    <property type="entry name" value="Transl_elong_EFTu/EF1A_C"/>
</dbReference>
<dbReference type="NCBIfam" id="TIGR00485">
    <property type="entry name" value="EF-Tu"/>
    <property type="match status" value="1"/>
</dbReference>
<dbReference type="NCBIfam" id="NF000766">
    <property type="entry name" value="PRK00049.1"/>
    <property type="match status" value="1"/>
</dbReference>
<dbReference type="NCBIfam" id="NF009372">
    <property type="entry name" value="PRK12735.1"/>
    <property type="match status" value="1"/>
</dbReference>
<dbReference type="NCBIfam" id="NF009373">
    <property type="entry name" value="PRK12736.1"/>
    <property type="match status" value="1"/>
</dbReference>
<dbReference type="NCBIfam" id="TIGR00231">
    <property type="entry name" value="small_GTP"/>
    <property type="match status" value="1"/>
</dbReference>
<dbReference type="PANTHER" id="PTHR43721:SF22">
    <property type="entry name" value="ELONGATION FACTOR TU, MITOCHONDRIAL"/>
    <property type="match status" value="1"/>
</dbReference>
<dbReference type="PANTHER" id="PTHR43721">
    <property type="entry name" value="ELONGATION FACTOR TU-RELATED"/>
    <property type="match status" value="1"/>
</dbReference>
<dbReference type="Pfam" id="PF00009">
    <property type="entry name" value="GTP_EFTU"/>
    <property type="match status" value="1"/>
</dbReference>
<dbReference type="Pfam" id="PF03144">
    <property type="entry name" value="GTP_EFTU_D2"/>
    <property type="match status" value="1"/>
</dbReference>
<dbReference type="Pfam" id="PF03143">
    <property type="entry name" value="GTP_EFTU_D3"/>
    <property type="match status" value="1"/>
</dbReference>
<dbReference type="PRINTS" id="PR00315">
    <property type="entry name" value="ELONGATNFCT"/>
</dbReference>
<dbReference type="SUPFAM" id="SSF50465">
    <property type="entry name" value="EF-Tu/eEF-1alpha/eIF2-gamma C-terminal domain"/>
    <property type="match status" value="1"/>
</dbReference>
<dbReference type="SUPFAM" id="SSF52540">
    <property type="entry name" value="P-loop containing nucleoside triphosphate hydrolases"/>
    <property type="match status" value="1"/>
</dbReference>
<dbReference type="SUPFAM" id="SSF50447">
    <property type="entry name" value="Translation proteins"/>
    <property type="match status" value="1"/>
</dbReference>
<dbReference type="PROSITE" id="PS00301">
    <property type="entry name" value="G_TR_1"/>
    <property type="match status" value="1"/>
</dbReference>
<dbReference type="PROSITE" id="PS51722">
    <property type="entry name" value="G_TR_2"/>
    <property type="match status" value="1"/>
</dbReference>
<name>EFTU1_XANC8</name>
<sequence length="396" mass="43171">MARAKFLREKLHVNVGTIGHVDHGKTTLTAALTKIGAERFGGEFKAYDAIDAAPEEKARGITISTAHVEYESAVRHYAHVDCPGHADYVKNMITGAAQMDGAILVCSAADGPMPQTREHILLSRQVGVPHIVVFLNKADMVDDAELLELVEMEVRELLSKYDFPGDDTPIIHGSARLALEGDQSDIGVPAILKLVEALDTFIPDPTRDVDRPFLMPVEDVFSISGRGTVVTGRIERGIIKVGDEIEIVGIRDTQKTTVTGVEMFRKLLDQGQAGDNAGLLLRGTKRDDVERGQVLCKPGSIKPHTEFEAEVYVLSKDEGGRHTPFFKGYRPQFYFRTTDITGACQLPEGVEMVMPGDNVKMVVTLINPVAMDEGLRFAIREGGRTVGAGVVAKIVK</sequence>
<protein>
    <recommendedName>
        <fullName evidence="2">Elongation factor Tu 1</fullName>
        <shortName evidence="2">EF-Tu 1</shortName>
        <ecNumber evidence="2">3.6.5.3</ecNumber>
    </recommendedName>
</protein>
<feature type="chain" id="PRO_0000337575" description="Elongation factor Tu 1">
    <location>
        <begin position="1"/>
        <end position="396"/>
    </location>
</feature>
<feature type="domain" description="tr-type G">
    <location>
        <begin position="10"/>
        <end position="206"/>
    </location>
</feature>
<feature type="region of interest" description="G1" evidence="1">
    <location>
        <begin position="19"/>
        <end position="26"/>
    </location>
</feature>
<feature type="region of interest" description="G2" evidence="1">
    <location>
        <begin position="60"/>
        <end position="64"/>
    </location>
</feature>
<feature type="region of interest" description="G3" evidence="1">
    <location>
        <begin position="81"/>
        <end position="84"/>
    </location>
</feature>
<feature type="region of interest" description="G4" evidence="1">
    <location>
        <begin position="136"/>
        <end position="139"/>
    </location>
</feature>
<feature type="region of interest" description="G5" evidence="1">
    <location>
        <begin position="174"/>
        <end position="176"/>
    </location>
</feature>
<feature type="binding site" evidence="2">
    <location>
        <begin position="19"/>
        <end position="26"/>
    </location>
    <ligand>
        <name>GTP</name>
        <dbReference type="ChEBI" id="CHEBI:37565"/>
    </ligand>
</feature>
<feature type="binding site" evidence="2">
    <location>
        <position position="26"/>
    </location>
    <ligand>
        <name>Mg(2+)</name>
        <dbReference type="ChEBI" id="CHEBI:18420"/>
    </ligand>
</feature>
<feature type="binding site" evidence="2">
    <location>
        <begin position="81"/>
        <end position="85"/>
    </location>
    <ligand>
        <name>GTP</name>
        <dbReference type="ChEBI" id="CHEBI:37565"/>
    </ligand>
</feature>
<feature type="binding site" evidence="2">
    <location>
        <begin position="136"/>
        <end position="139"/>
    </location>
    <ligand>
        <name>GTP</name>
        <dbReference type="ChEBI" id="CHEBI:37565"/>
    </ligand>
</feature>